<feature type="chain" id="PRO_0000323403" description="Large ribosomal subunit protein uL22">
    <location>
        <begin position="1"/>
        <end position="186"/>
    </location>
</feature>
<feature type="region of interest" description="Disordered" evidence="1">
    <location>
        <begin position="160"/>
        <end position="186"/>
    </location>
</feature>
<feature type="compositionally biased region" description="Basic and acidic residues" evidence="1">
    <location>
        <begin position="177"/>
        <end position="186"/>
    </location>
</feature>
<accession>Q1HR65</accession>
<accession>J9HTH1</accession>
<dbReference type="EMBL" id="DQ440229">
    <property type="protein sequence ID" value="ABF18262.1"/>
    <property type="molecule type" value="mRNA"/>
</dbReference>
<dbReference type="EMBL" id="CH477768">
    <property type="protein sequence ID" value="EAT36435.1"/>
    <property type="molecule type" value="Genomic_DNA"/>
</dbReference>
<dbReference type="EMBL" id="CH477768">
    <property type="protein sequence ID" value="EAT36436.1"/>
    <property type="molecule type" value="Genomic_DNA"/>
</dbReference>
<dbReference type="EMBL" id="CH477768">
    <property type="protein sequence ID" value="EAT36437.1"/>
    <property type="molecule type" value="Genomic_DNA"/>
</dbReference>
<dbReference type="EMBL" id="CH477768">
    <property type="protein sequence ID" value="EJY57923.1"/>
    <property type="molecule type" value="Genomic_DNA"/>
</dbReference>
<dbReference type="RefSeq" id="XP_001655389.1">
    <property type="nucleotide sequence ID" value="XM_001655339.1"/>
</dbReference>
<dbReference type="RefSeq" id="XP_011493606.1">
    <property type="nucleotide sequence ID" value="XM_011495304.1"/>
</dbReference>
<dbReference type="SMR" id="Q1HR65"/>
<dbReference type="FunCoup" id="Q1HR65">
    <property type="interactions" value="719"/>
</dbReference>
<dbReference type="STRING" id="7159.Q1HR65"/>
<dbReference type="PaxDb" id="7159-AAEL011471-PC"/>
<dbReference type="EnsemblMetazoa" id="AAEL011471-RE">
    <property type="protein sequence ID" value="AAEL011471-PE"/>
    <property type="gene ID" value="AAEL011471"/>
</dbReference>
<dbReference type="EnsemblMetazoa" id="AAEL011471-RF">
    <property type="protein sequence ID" value="AAEL011471-PF"/>
    <property type="gene ID" value="AAEL011471"/>
</dbReference>
<dbReference type="EnsemblMetazoa" id="AAEL011471-RG">
    <property type="protein sequence ID" value="AAEL011471-PG"/>
    <property type="gene ID" value="AAEL011471"/>
</dbReference>
<dbReference type="GeneID" id="5574866"/>
<dbReference type="KEGG" id="aag:5574866"/>
<dbReference type="CTD" id="6139"/>
<dbReference type="VEuPathDB" id="VectorBase:AAEL011471"/>
<dbReference type="eggNOG" id="KOG3353">
    <property type="taxonomic scope" value="Eukaryota"/>
</dbReference>
<dbReference type="HOGENOM" id="CLU_083987_0_1_1"/>
<dbReference type="InParanoid" id="Q1HR65"/>
<dbReference type="OMA" id="QVNHAPC"/>
<dbReference type="OrthoDB" id="10254664at2759"/>
<dbReference type="PhylomeDB" id="Q1HR65"/>
<dbReference type="Proteomes" id="UP000008820">
    <property type="component" value="Chromosome 3"/>
</dbReference>
<dbReference type="Proteomes" id="UP000682892">
    <property type="component" value="Unassembled WGS sequence"/>
</dbReference>
<dbReference type="GO" id="GO:0022625">
    <property type="term" value="C:cytosolic large ribosomal subunit"/>
    <property type="evidence" value="ECO:0007669"/>
    <property type="project" value="TreeGrafter"/>
</dbReference>
<dbReference type="GO" id="GO:0003735">
    <property type="term" value="F:structural constituent of ribosome"/>
    <property type="evidence" value="ECO:0007669"/>
    <property type="project" value="InterPro"/>
</dbReference>
<dbReference type="GO" id="GO:0002181">
    <property type="term" value="P:cytoplasmic translation"/>
    <property type="evidence" value="ECO:0007669"/>
    <property type="project" value="TreeGrafter"/>
</dbReference>
<dbReference type="CDD" id="cd00336">
    <property type="entry name" value="Ribosomal_L22"/>
    <property type="match status" value="1"/>
</dbReference>
<dbReference type="FunFam" id="3.90.470.10:FF:000003">
    <property type="entry name" value="60S ribosomal protein L17"/>
    <property type="match status" value="1"/>
</dbReference>
<dbReference type="Gene3D" id="3.90.470.10">
    <property type="entry name" value="Ribosomal protein L22/L17"/>
    <property type="match status" value="1"/>
</dbReference>
<dbReference type="InterPro" id="IPR001063">
    <property type="entry name" value="Ribosomal_uL22"/>
</dbReference>
<dbReference type="InterPro" id="IPR018260">
    <property type="entry name" value="Ribosomal_uL22_CS"/>
</dbReference>
<dbReference type="InterPro" id="IPR005721">
    <property type="entry name" value="Ribosomal_uL22_euk/arc"/>
</dbReference>
<dbReference type="InterPro" id="IPR036394">
    <property type="entry name" value="Ribosomal_uL22_sf"/>
</dbReference>
<dbReference type="NCBIfam" id="TIGR01038">
    <property type="entry name" value="uL22_arch_euk"/>
    <property type="match status" value="1"/>
</dbReference>
<dbReference type="PANTHER" id="PTHR11593">
    <property type="entry name" value="60S RIBOSOMAL PROTEIN L17"/>
    <property type="match status" value="1"/>
</dbReference>
<dbReference type="PANTHER" id="PTHR11593:SF10">
    <property type="entry name" value="60S RIBOSOMAL PROTEIN L17"/>
    <property type="match status" value="1"/>
</dbReference>
<dbReference type="Pfam" id="PF00237">
    <property type="entry name" value="Ribosomal_L22"/>
    <property type="match status" value="1"/>
</dbReference>
<dbReference type="SUPFAM" id="SSF54843">
    <property type="entry name" value="Ribosomal protein L22"/>
    <property type="match status" value="1"/>
</dbReference>
<dbReference type="PROSITE" id="PS00464">
    <property type="entry name" value="RIBOSOMAL_L22"/>
    <property type="match status" value="1"/>
</dbReference>
<gene>
    <name type="primary">RpL17</name>
    <name type="ORF">AAEL011471</name>
</gene>
<keyword id="KW-1185">Reference proteome</keyword>
<keyword id="KW-0687">Ribonucleoprotein</keyword>
<keyword id="KW-0689">Ribosomal protein</keyword>
<protein>
    <recommendedName>
        <fullName evidence="2">Large ribosomal subunit protein uL22</fullName>
    </recommendedName>
    <alternativeName>
        <fullName>60S ribosomal protein L17</fullName>
    </alternativeName>
</protein>
<evidence type="ECO:0000256" key="1">
    <source>
        <dbReference type="SAM" id="MobiDB-lite"/>
    </source>
</evidence>
<evidence type="ECO:0000305" key="2"/>
<comment type="similarity">
    <text evidence="2">Belongs to the universal ribosomal protein uL22 family.</text>
</comment>
<organism>
    <name type="scientific">Aedes aegypti</name>
    <name type="common">Yellowfever mosquito</name>
    <name type="synonym">Culex aegypti</name>
    <dbReference type="NCBI Taxonomy" id="7159"/>
    <lineage>
        <taxon>Eukaryota</taxon>
        <taxon>Metazoa</taxon>
        <taxon>Ecdysozoa</taxon>
        <taxon>Arthropoda</taxon>
        <taxon>Hexapoda</taxon>
        <taxon>Insecta</taxon>
        <taxon>Pterygota</taxon>
        <taxon>Neoptera</taxon>
        <taxon>Endopterygota</taxon>
        <taxon>Diptera</taxon>
        <taxon>Nematocera</taxon>
        <taxon>Culicoidea</taxon>
        <taxon>Culicidae</taxon>
        <taxon>Culicinae</taxon>
        <taxon>Aedini</taxon>
        <taxon>Aedes</taxon>
        <taxon>Stegomyia</taxon>
    </lineage>
</organism>
<sequence length="186" mass="21557">MGRYAKEPDNPAKSCKARGSNLRVHFKNTRETALAIKRMPLRRAQKFLKNVCEKKECVPFRRFNGGVGRCAQAKHWNTSVGRWPKKSAEFLLQLLKNAEANADYRGLDVDRLVVDHIQVNRAPCLRRRTYRAHGRINPYMSSPCHIELSLTEKEDVVTKAAENEPAKKKLSKKKLQRQKEKMMRNE</sequence>
<name>RL17_AEDAE</name>
<reference key="1">
    <citation type="journal article" date="2007" name="BMC Genomics">
        <title>An annotated catalogue of salivary gland transcripts in the adult female mosquito, Aedes aegypti.</title>
        <authorList>
            <person name="Ribeiro J.M.C."/>
            <person name="Arca B."/>
            <person name="Lombardo F."/>
            <person name="Calvo E."/>
            <person name="Phan V.M."/>
            <person name="Chandra P.K."/>
            <person name="Wikel S.K."/>
        </authorList>
    </citation>
    <scope>NUCLEOTIDE SEQUENCE [LARGE SCALE MRNA]</scope>
    <source>
        <strain>Black-eyed Liverpool</strain>
        <tissue>Salivary gland</tissue>
    </source>
</reference>
<reference key="2">
    <citation type="journal article" date="2007" name="Science">
        <title>Genome sequence of Aedes aegypti, a major arbovirus vector.</title>
        <authorList>
            <person name="Nene V."/>
            <person name="Wortman J.R."/>
            <person name="Lawson D."/>
            <person name="Haas B.J."/>
            <person name="Kodira C.D."/>
            <person name="Tu Z.J."/>
            <person name="Loftus B.J."/>
            <person name="Xi Z."/>
            <person name="Megy K."/>
            <person name="Grabherr M."/>
            <person name="Ren Q."/>
            <person name="Zdobnov E.M."/>
            <person name="Lobo N.F."/>
            <person name="Campbell K.S."/>
            <person name="Brown S.E."/>
            <person name="Bonaldo M.F."/>
            <person name="Zhu J."/>
            <person name="Sinkins S.P."/>
            <person name="Hogenkamp D.G."/>
            <person name="Amedeo P."/>
            <person name="Arensburger P."/>
            <person name="Atkinson P.W."/>
            <person name="Bidwell S.L."/>
            <person name="Biedler J."/>
            <person name="Birney E."/>
            <person name="Bruggner R.V."/>
            <person name="Costas J."/>
            <person name="Coy M.R."/>
            <person name="Crabtree J."/>
            <person name="Crawford M."/>
            <person name="DeBruyn B."/>
            <person name="DeCaprio D."/>
            <person name="Eiglmeier K."/>
            <person name="Eisenstadt E."/>
            <person name="El-Dorry H."/>
            <person name="Gelbart W.M."/>
            <person name="Gomes S.L."/>
            <person name="Hammond M."/>
            <person name="Hannick L.I."/>
            <person name="Hogan J.R."/>
            <person name="Holmes M.H."/>
            <person name="Jaffe D."/>
            <person name="Johnston S.J."/>
            <person name="Kennedy R.C."/>
            <person name="Koo H."/>
            <person name="Kravitz S."/>
            <person name="Kriventseva E.V."/>
            <person name="Kulp D."/>
            <person name="Labutti K."/>
            <person name="Lee E."/>
            <person name="Li S."/>
            <person name="Lovin D.D."/>
            <person name="Mao C."/>
            <person name="Mauceli E."/>
            <person name="Menck C.F."/>
            <person name="Miller J.R."/>
            <person name="Montgomery P."/>
            <person name="Mori A."/>
            <person name="Nascimento A.L."/>
            <person name="Naveira H.F."/>
            <person name="Nusbaum C."/>
            <person name="O'Leary S.B."/>
            <person name="Orvis J."/>
            <person name="Pertea M."/>
            <person name="Quesneville H."/>
            <person name="Reidenbach K.R."/>
            <person name="Rogers Y.-H.C."/>
            <person name="Roth C.W."/>
            <person name="Schneider J.R."/>
            <person name="Schatz M."/>
            <person name="Shumway M."/>
            <person name="Stanke M."/>
            <person name="Stinson E.O."/>
            <person name="Tubio J.M.C."/>
            <person name="Vanzee J.P."/>
            <person name="Verjovski-Almeida S."/>
            <person name="Werner D."/>
            <person name="White O.R."/>
            <person name="Wyder S."/>
            <person name="Zeng Q."/>
            <person name="Zhao Q."/>
            <person name="Zhao Y."/>
            <person name="Hill C.A."/>
            <person name="Raikhel A.S."/>
            <person name="Soares M.B."/>
            <person name="Knudson D.L."/>
            <person name="Lee N.H."/>
            <person name="Galagan J."/>
            <person name="Salzberg S.L."/>
            <person name="Paulsen I.T."/>
            <person name="Dimopoulos G."/>
            <person name="Collins F.H."/>
            <person name="Bruce B."/>
            <person name="Fraser-Liggett C.M."/>
            <person name="Severson D.W."/>
        </authorList>
    </citation>
    <scope>NUCLEOTIDE SEQUENCE [LARGE SCALE GENOMIC DNA]</scope>
    <source>
        <strain>LVPib12</strain>
    </source>
</reference>
<proteinExistence type="evidence at transcript level"/>